<comment type="function">
    <text evidence="1">Major role in the synthesis of nucleoside triphosphates other than ATP. The ATP gamma phosphate is transferred to the NDP beta phosphate via a ping-pong mechanism, using a phosphorylated active-site intermediate.</text>
</comment>
<comment type="catalytic activity">
    <reaction evidence="1">
        <text>a 2'-deoxyribonucleoside 5'-diphosphate + ATP = a 2'-deoxyribonucleoside 5'-triphosphate + ADP</text>
        <dbReference type="Rhea" id="RHEA:44640"/>
        <dbReference type="ChEBI" id="CHEBI:30616"/>
        <dbReference type="ChEBI" id="CHEBI:61560"/>
        <dbReference type="ChEBI" id="CHEBI:73316"/>
        <dbReference type="ChEBI" id="CHEBI:456216"/>
        <dbReference type="EC" id="2.7.4.6"/>
    </reaction>
</comment>
<comment type="catalytic activity">
    <reaction evidence="1">
        <text>a ribonucleoside 5'-diphosphate + ATP = a ribonucleoside 5'-triphosphate + ADP</text>
        <dbReference type="Rhea" id="RHEA:18113"/>
        <dbReference type="ChEBI" id="CHEBI:30616"/>
        <dbReference type="ChEBI" id="CHEBI:57930"/>
        <dbReference type="ChEBI" id="CHEBI:61557"/>
        <dbReference type="ChEBI" id="CHEBI:456216"/>
        <dbReference type="EC" id="2.7.4.6"/>
    </reaction>
</comment>
<comment type="cofactor">
    <cofactor evidence="1">
        <name>Mg(2+)</name>
        <dbReference type="ChEBI" id="CHEBI:18420"/>
    </cofactor>
</comment>
<comment type="subunit">
    <text evidence="1">Homotetramer.</text>
</comment>
<comment type="subcellular location">
    <subcellularLocation>
        <location evidence="1">Cytoplasm</location>
    </subcellularLocation>
</comment>
<comment type="similarity">
    <text evidence="1">Belongs to the NDK family.</text>
</comment>
<dbReference type="EC" id="2.7.4.6" evidence="1"/>
<dbReference type="EMBL" id="CP000747">
    <property type="protein sequence ID" value="ACG78231.1"/>
    <property type="molecule type" value="Genomic_DNA"/>
</dbReference>
<dbReference type="RefSeq" id="WP_012522373.1">
    <property type="nucleotide sequence ID" value="NC_011144.1"/>
</dbReference>
<dbReference type="SMR" id="B4RCP4"/>
<dbReference type="STRING" id="450851.PHZ_c1820"/>
<dbReference type="KEGG" id="pzu:PHZ_c1820"/>
<dbReference type="eggNOG" id="COG0105">
    <property type="taxonomic scope" value="Bacteria"/>
</dbReference>
<dbReference type="HOGENOM" id="CLU_060216_8_1_5"/>
<dbReference type="OrthoDB" id="9801161at2"/>
<dbReference type="Proteomes" id="UP000001868">
    <property type="component" value="Chromosome"/>
</dbReference>
<dbReference type="GO" id="GO:0005737">
    <property type="term" value="C:cytoplasm"/>
    <property type="evidence" value="ECO:0007669"/>
    <property type="project" value="UniProtKB-SubCell"/>
</dbReference>
<dbReference type="GO" id="GO:0005524">
    <property type="term" value="F:ATP binding"/>
    <property type="evidence" value="ECO:0007669"/>
    <property type="project" value="UniProtKB-UniRule"/>
</dbReference>
<dbReference type="GO" id="GO:0046872">
    <property type="term" value="F:metal ion binding"/>
    <property type="evidence" value="ECO:0007669"/>
    <property type="project" value="UniProtKB-KW"/>
</dbReference>
<dbReference type="GO" id="GO:0004550">
    <property type="term" value="F:nucleoside diphosphate kinase activity"/>
    <property type="evidence" value="ECO:0007669"/>
    <property type="project" value="UniProtKB-UniRule"/>
</dbReference>
<dbReference type="GO" id="GO:0006241">
    <property type="term" value="P:CTP biosynthetic process"/>
    <property type="evidence" value="ECO:0007669"/>
    <property type="project" value="UniProtKB-UniRule"/>
</dbReference>
<dbReference type="GO" id="GO:0006183">
    <property type="term" value="P:GTP biosynthetic process"/>
    <property type="evidence" value="ECO:0007669"/>
    <property type="project" value="UniProtKB-UniRule"/>
</dbReference>
<dbReference type="GO" id="GO:0006228">
    <property type="term" value="P:UTP biosynthetic process"/>
    <property type="evidence" value="ECO:0007669"/>
    <property type="project" value="UniProtKB-UniRule"/>
</dbReference>
<dbReference type="CDD" id="cd04413">
    <property type="entry name" value="NDPk_I"/>
    <property type="match status" value="1"/>
</dbReference>
<dbReference type="FunFam" id="3.30.70.141:FF:000001">
    <property type="entry name" value="Nucleoside diphosphate kinase"/>
    <property type="match status" value="1"/>
</dbReference>
<dbReference type="Gene3D" id="3.30.70.141">
    <property type="entry name" value="Nucleoside diphosphate kinase-like domain"/>
    <property type="match status" value="1"/>
</dbReference>
<dbReference type="HAMAP" id="MF_00451">
    <property type="entry name" value="NDP_kinase"/>
    <property type="match status" value="1"/>
</dbReference>
<dbReference type="InterPro" id="IPR034907">
    <property type="entry name" value="NDK-like_dom"/>
</dbReference>
<dbReference type="InterPro" id="IPR036850">
    <property type="entry name" value="NDK-like_dom_sf"/>
</dbReference>
<dbReference type="InterPro" id="IPR001564">
    <property type="entry name" value="Nucleoside_diP_kinase"/>
</dbReference>
<dbReference type="InterPro" id="IPR023005">
    <property type="entry name" value="Nucleoside_diP_kinase_AS"/>
</dbReference>
<dbReference type="NCBIfam" id="NF001908">
    <property type="entry name" value="PRK00668.1"/>
    <property type="match status" value="1"/>
</dbReference>
<dbReference type="PANTHER" id="PTHR46161">
    <property type="entry name" value="NUCLEOSIDE DIPHOSPHATE KINASE"/>
    <property type="match status" value="1"/>
</dbReference>
<dbReference type="PANTHER" id="PTHR46161:SF3">
    <property type="entry name" value="NUCLEOSIDE DIPHOSPHATE KINASE DDB_G0292928-RELATED"/>
    <property type="match status" value="1"/>
</dbReference>
<dbReference type="Pfam" id="PF00334">
    <property type="entry name" value="NDK"/>
    <property type="match status" value="1"/>
</dbReference>
<dbReference type="PRINTS" id="PR01243">
    <property type="entry name" value="NUCDPKINASE"/>
</dbReference>
<dbReference type="SMART" id="SM00562">
    <property type="entry name" value="NDK"/>
    <property type="match status" value="1"/>
</dbReference>
<dbReference type="SUPFAM" id="SSF54919">
    <property type="entry name" value="Nucleoside diphosphate kinase, NDK"/>
    <property type="match status" value="1"/>
</dbReference>
<dbReference type="PROSITE" id="PS00469">
    <property type="entry name" value="NDPK"/>
    <property type="match status" value="1"/>
</dbReference>
<dbReference type="PROSITE" id="PS51374">
    <property type="entry name" value="NDPK_LIKE"/>
    <property type="match status" value="1"/>
</dbReference>
<reference key="1">
    <citation type="journal article" date="2008" name="BMC Genomics">
        <title>Complete genome of Phenylobacterium zucineum - a novel facultative intracellular bacterium isolated from human erythroleukemia cell line K562.</title>
        <authorList>
            <person name="Luo Y."/>
            <person name="Xu X."/>
            <person name="Ding Z."/>
            <person name="Liu Z."/>
            <person name="Zhang B."/>
            <person name="Yan Z."/>
            <person name="Sun J."/>
            <person name="Hu S."/>
            <person name="Hu X."/>
        </authorList>
    </citation>
    <scope>NUCLEOTIDE SEQUENCE [LARGE SCALE GENOMIC DNA]</scope>
    <source>
        <strain>HLK1</strain>
    </source>
</reference>
<feature type="chain" id="PRO_1000192284" description="Nucleoside diphosphate kinase">
    <location>
        <begin position="1"/>
        <end position="139"/>
    </location>
</feature>
<feature type="active site" description="Pros-phosphohistidine intermediate" evidence="1">
    <location>
        <position position="116"/>
    </location>
</feature>
<feature type="binding site" evidence="1">
    <location>
        <position position="10"/>
    </location>
    <ligand>
        <name>ATP</name>
        <dbReference type="ChEBI" id="CHEBI:30616"/>
    </ligand>
</feature>
<feature type="binding site" evidence="1">
    <location>
        <position position="58"/>
    </location>
    <ligand>
        <name>ATP</name>
        <dbReference type="ChEBI" id="CHEBI:30616"/>
    </ligand>
</feature>
<feature type="binding site" evidence="1">
    <location>
        <position position="86"/>
    </location>
    <ligand>
        <name>ATP</name>
        <dbReference type="ChEBI" id="CHEBI:30616"/>
    </ligand>
</feature>
<feature type="binding site" evidence="1">
    <location>
        <position position="92"/>
    </location>
    <ligand>
        <name>ATP</name>
        <dbReference type="ChEBI" id="CHEBI:30616"/>
    </ligand>
</feature>
<feature type="binding site" evidence="1">
    <location>
        <position position="103"/>
    </location>
    <ligand>
        <name>ATP</name>
        <dbReference type="ChEBI" id="CHEBI:30616"/>
    </ligand>
</feature>
<feature type="binding site" evidence="1">
    <location>
        <position position="113"/>
    </location>
    <ligand>
        <name>ATP</name>
        <dbReference type="ChEBI" id="CHEBI:30616"/>
    </ligand>
</feature>
<evidence type="ECO:0000255" key="1">
    <source>
        <dbReference type="HAMAP-Rule" id="MF_00451"/>
    </source>
</evidence>
<keyword id="KW-0067">ATP-binding</keyword>
<keyword id="KW-0963">Cytoplasm</keyword>
<keyword id="KW-0418">Kinase</keyword>
<keyword id="KW-0460">Magnesium</keyword>
<keyword id="KW-0479">Metal-binding</keyword>
<keyword id="KW-0546">Nucleotide metabolism</keyword>
<keyword id="KW-0547">Nucleotide-binding</keyword>
<keyword id="KW-0597">Phosphoprotein</keyword>
<keyword id="KW-1185">Reference proteome</keyword>
<keyword id="KW-0808">Transferase</keyword>
<organism>
    <name type="scientific">Phenylobacterium zucineum (strain HLK1)</name>
    <dbReference type="NCBI Taxonomy" id="450851"/>
    <lineage>
        <taxon>Bacteria</taxon>
        <taxon>Pseudomonadati</taxon>
        <taxon>Pseudomonadota</taxon>
        <taxon>Alphaproteobacteria</taxon>
        <taxon>Caulobacterales</taxon>
        <taxon>Caulobacteraceae</taxon>
        <taxon>Phenylobacterium</taxon>
    </lineage>
</organism>
<protein>
    <recommendedName>
        <fullName evidence="1">Nucleoside diphosphate kinase</fullName>
        <shortName evidence="1">NDK</shortName>
        <shortName evidence="1">NDP kinase</shortName>
        <ecNumber evidence="1">2.7.4.6</ecNumber>
    </recommendedName>
    <alternativeName>
        <fullName evidence="1">Nucleoside-2-P kinase</fullName>
    </alternativeName>
</protein>
<sequence>MTERTFSIIKPDATRRNLTGKVNAVIEDAGLRIVAQKRIRMSRAQAEKFYEVHKERPFFGELVEFMTSAPVVVQVLEGENAVARYREVMGATNPAQAADGTIRKLYAESVGENSVHGSDSLENAKIEIAQFFTEDEIVG</sequence>
<proteinExistence type="inferred from homology"/>
<accession>B4RCP4</accession>
<gene>
    <name evidence="1" type="primary">ndk</name>
    <name type="ordered locus">PHZ_c1820</name>
</gene>
<name>NDK_PHEZH</name>